<dbReference type="EMBL" id="HQ670407">
    <property type="protein sequence ID" value="AEB33710.1"/>
    <property type="molecule type" value="mRNA"/>
</dbReference>
<dbReference type="EMBL" id="KV862168">
    <property type="protein sequence ID" value="OIV90516.1"/>
    <property type="molecule type" value="Genomic_DNA"/>
</dbReference>
<dbReference type="EMBL" id="CM007380">
    <property type="status" value="NOT_ANNOTATED_CDS"/>
    <property type="molecule type" value="Genomic_DNA"/>
</dbReference>
<dbReference type="RefSeq" id="XP_019429051.1">
    <property type="nucleotide sequence ID" value="XM_019573506.1"/>
</dbReference>
<dbReference type="SMR" id="F5B8V7"/>
<dbReference type="STRING" id="3871.F5B8V7"/>
<dbReference type="EnsemblPlants" id="OIV90516">
    <property type="protein sequence ID" value="OIV90516"/>
    <property type="gene ID" value="TanjilG_32393"/>
</dbReference>
<dbReference type="Gramene" id="OIV90516">
    <property type="protein sequence ID" value="OIV90516"/>
    <property type="gene ID" value="TanjilG_32393"/>
</dbReference>
<dbReference type="KEGG" id="lang:109336727"/>
<dbReference type="OMA" id="QAKHYQG"/>
<dbReference type="OrthoDB" id="1903982at2759"/>
<dbReference type="Proteomes" id="UP000188354">
    <property type="component" value="Chromosome LG20"/>
</dbReference>
<dbReference type="GO" id="GO:0045735">
    <property type="term" value="F:nutrient reservoir activity"/>
    <property type="evidence" value="ECO:0007669"/>
    <property type="project" value="UniProtKB-KW"/>
</dbReference>
<dbReference type="CDD" id="cd02243">
    <property type="entry name" value="cupin_11S_legumin_C"/>
    <property type="match status" value="1"/>
</dbReference>
<dbReference type="CDD" id="cd02242">
    <property type="entry name" value="cupin_11S_legumin_N"/>
    <property type="match status" value="1"/>
</dbReference>
<dbReference type="FunFam" id="2.60.120.10:FF:000073">
    <property type="entry name" value="Glycinin G1"/>
    <property type="match status" value="1"/>
</dbReference>
<dbReference type="Gene3D" id="2.60.120.10">
    <property type="entry name" value="Jelly Rolls"/>
    <property type="match status" value="3"/>
</dbReference>
<dbReference type="InterPro" id="IPR022379">
    <property type="entry name" value="11S_seedstore_CS"/>
</dbReference>
<dbReference type="InterPro" id="IPR006044">
    <property type="entry name" value="11S_seedstore_pln"/>
</dbReference>
<dbReference type="InterPro" id="IPR006045">
    <property type="entry name" value="Cupin_1"/>
</dbReference>
<dbReference type="InterPro" id="IPR014710">
    <property type="entry name" value="RmlC-like_jellyroll"/>
</dbReference>
<dbReference type="InterPro" id="IPR011051">
    <property type="entry name" value="RmlC_Cupin_sf"/>
</dbReference>
<dbReference type="InterPro" id="IPR050253">
    <property type="entry name" value="Seed_Storage-Functional"/>
</dbReference>
<dbReference type="PANTHER" id="PTHR31189:SF63">
    <property type="entry name" value="GLYCININ G5"/>
    <property type="match status" value="1"/>
</dbReference>
<dbReference type="PANTHER" id="PTHR31189">
    <property type="entry name" value="OS03G0336100 PROTEIN-RELATED"/>
    <property type="match status" value="1"/>
</dbReference>
<dbReference type="Pfam" id="PF00190">
    <property type="entry name" value="Cupin_1"/>
    <property type="match status" value="2"/>
</dbReference>
<dbReference type="PRINTS" id="PR00439">
    <property type="entry name" value="11SGLOBULIN"/>
</dbReference>
<dbReference type="SMART" id="SM00835">
    <property type="entry name" value="Cupin_1"/>
    <property type="match status" value="2"/>
</dbReference>
<dbReference type="SUPFAM" id="SSF51182">
    <property type="entry name" value="RmlC-like cupins"/>
    <property type="match status" value="1"/>
</dbReference>
<dbReference type="PROSITE" id="PS00305">
    <property type="entry name" value="11S_SEED_STORAGE"/>
    <property type="match status" value="1"/>
</dbReference>
<reference key="1">
    <citation type="journal article" date="2011" name="BMC Plant Biol.">
        <title>Identification and characterisation of seed storage protein transcripts from Lupinus angustifolius.</title>
        <authorList>
            <person name="Foley R.C."/>
            <person name="Gao L.-L."/>
            <person name="Spriggs A."/>
            <person name="Soo L.Y.C."/>
            <person name="Goggin D.E."/>
            <person name="Smith P.M.C."/>
            <person name="Atkins C.A."/>
            <person name="Singh K.B."/>
        </authorList>
    </citation>
    <scope>NUCLEOTIDE SEQUENCE [MRNA]</scope>
    <scope>FUNCTION</scope>
    <scope>DEVELOPMENTAL STAGE</scope>
    <scope>ALLERGEN</scope>
    <source>
        <strain>cv. Tanjil</strain>
        <tissue>Seed</tissue>
    </source>
</reference>
<reference key="2">
    <citation type="journal article" date="2017" name="Plant Biotechnol. J.">
        <title>A comprehensive draft genome sequence for lupin (Lupinus angustifolius), an emerging health food: insights into plant-microbe interactions and legume evolution.</title>
        <authorList>
            <person name="Hane J.K."/>
            <person name="Ming Y."/>
            <person name="Kamphuis L.G."/>
            <person name="Nelson M.N."/>
            <person name="Garg G."/>
            <person name="Atkins C.A."/>
            <person name="Bayer P.E."/>
            <person name="Bravo A."/>
            <person name="Bringans S."/>
            <person name="Cannon S."/>
            <person name="Edwards D."/>
            <person name="Foley R."/>
            <person name="Gao L.L."/>
            <person name="Harrison M.J."/>
            <person name="Huang W."/>
            <person name="Hurgobin B."/>
            <person name="Li S."/>
            <person name="Liu C.W."/>
            <person name="McGrath A."/>
            <person name="Morahan G."/>
            <person name="Murray J."/>
            <person name="Weller J."/>
            <person name="Jian J."/>
            <person name="Singh K.B."/>
        </authorList>
    </citation>
    <scope>NUCLEOTIDE SEQUENCE [LARGE SCALE GENOMIC DNA]</scope>
    <source>
        <strain>cv. Tanjil</strain>
        <tissue>Seedling</tissue>
    </source>
</reference>
<reference key="3">
    <citation type="journal article" date="2012" name="J. Agric. Food Chem.">
        <title>Release of flavonoids from lupin globulin proteins during digestion in a model system.</title>
        <authorList>
            <person name="Czubinski J."/>
            <person name="Dwiecki K."/>
            <person name="Siger A."/>
            <person name="Kachlicki P."/>
            <person name="Neunert G."/>
            <person name="Lampart-Szczapa E."/>
            <person name="Nogala-Kalucka M."/>
        </authorList>
    </citation>
    <scope>SUBUNIT</scope>
    <source>
        <strain>cv. Zeus</strain>
    </source>
</reference>
<accession>F5B8V7</accession>
<gene>
    <name evidence="9" type="ORF">TanjilG_32393</name>
</gene>
<protein>
    <recommendedName>
        <fullName evidence="5">Conglutin alpha 2</fullName>
    </recommendedName>
    <allergenName evidence="6">Lup an alpha-conglutin</allergenName>
    <component>
        <recommendedName>
            <fullName evidence="1">Conglutin alpha 2A subunit</fullName>
        </recommendedName>
    </component>
    <component>
        <recommendedName>
            <fullName evidence="1">Conglutin alpha 2B subunit</fullName>
        </recommendedName>
    </component>
</protein>
<evidence type="ECO:0000250" key="1">
    <source>
        <dbReference type="UniProtKB" id="P04347"/>
    </source>
</evidence>
<evidence type="ECO:0000255" key="2"/>
<evidence type="ECO:0000256" key="3">
    <source>
        <dbReference type="SAM" id="MobiDB-lite"/>
    </source>
</evidence>
<evidence type="ECO:0000269" key="4">
    <source>
    </source>
</evidence>
<evidence type="ECO:0000303" key="5">
    <source>
    </source>
</evidence>
<evidence type="ECO:0000305" key="6"/>
<evidence type="ECO:0000305" key="7">
    <source>
    </source>
</evidence>
<evidence type="ECO:0000305" key="8">
    <source>
    </source>
</evidence>
<evidence type="ECO:0000312" key="9">
    <source>
        <dbReference type="EMBL" id="OIV90516.1"/>
    </source>
</evidence>
<comment type="function">
    <text evidence="4">Sulfur-rich seed storage protein. This protein found in the seeds of many leguminous and non-leguminous plants is the source of sulfur-containing amino acids in seed meals.</text>
</comment>
<comment type="subunit">
    <text evidence="1 8">Hexamer; each subunit is composed of an acidic and a basic chain derived from a single precursor and linked by a disulfide bond (By similarity). Component of globulins complexes which accumulate in seeds (Probable).</text>
</comment>
<comment type="developmental stage">
    <text evidence="4">Accumulates during seed development.</text>
</comment>
<comment type="allergen">
    <text evidence="7">Causes an allergic reaction in human.</text>
</comment>
<comment type="similarity">
    <text evidence="6">Belongs to the 11S seed storage protein (globulins) family.</text>
</comment>
<organism>
    <name type="scientific">Lupinus angustifolius</name>
    <name type="common">Narrow-leaved blue lupine</name>
    <dbReference type="NCBI Taxonomy" id="3871"/>
    <lineage>
        <taxon>Eukaryota</taxon>
        <taxon>Viridiplantae</taxon>
        <taxon>Streptophyta</taxon>
        <taxon>Embryophyta</taxon>
        <taxon>Tracheophyta</taxon>
        <taxon>Spermatophyta</taxon>
        <taxon>Magnoliopsida</taxon>
        <taxon>eudicotyledons</taxon>
        <taxon>Gunneridae</taxon>
        <taxon>Pentapetalae</taxon>
        <taxon>rosids</taxon>
        <taxon>fabids</taxon>
        <taxon>Fabales</taxon>
        <taxon>Fabaceae</taxon>
        <taxon>Papilionoideae</taxon>
        <taxon>50 kb inversion clade</taxon>
        <taxon>genistoids sensu lato</taxon>
        <taxon>core genistoids</taxon>
        <taxon>Genisteae</taxon>
        <taxon>Lupinus</taxon>
    </lineage>
</organism>
<feature type="signal peptide" evidence="2">
    <location>
        <begin position="1"/>
        <end position="22"/>
    </location>
</feature>
<feature type="chain" id="PRO_5010895118" description="Conglutin alpha 2">
    <location>
        <begin position="23"/>
        <end position="643"/>
    </location>
</feature>
<feature type="chain" id="PRO_0000446135" description="Conglutin alpha 2A subunit" evidence="1">
    <location>
        <begin position="23"/>
        <end position="457"/>
    </location>
</feature>
<feature type="chain" id="PRO_0000446136" description="Conglutin alpha 2B subunit" evidence="1">
    <location>
        <begin position="458"/>
        <end position="630"/>
    </location>
</feature>
<feature type="domain" description="Cupin type-1 1" evidence="2">
    <location>
        <begin position="36"/>
        <end position="261"/>
    </location>
</feature>
<feature type="domain" description="Cupin type-1 2" evidence="2">
    <location>
        <begin position="470"/>
        <end position="616"/>
    </location>
</feature>
<feature type="region of interest" description="Disordered" evidence="3">
    <location>
        <begin position="110"/>
        <end position="142"/>
    </location>
</feature>
<feature type="region of interest" description="Disordered" evidence="3">
    <location>
        <begin position="190"/>
        <end position="243"/>
    </location>
</feature>
<feature type="region of interest" description="Disordered" evidence="3">
    <location>
        <begin position="285"/>
        <end position="458"/>
    </location>
</feature>
<feature type="region of interest" description="Disordered" evidence="3">
    <location>
        <begin position="623"/>
        <end position="643"/>
    </location>
</feature>
<feature type="compositionally biased region" description="Low complexity" evidence="3">
    <location>
        <begin position="207"/>
        <end position="218"/>
    </location>
</feature>
<feature type="compositionally biased region" description="Basic and acidic residues" evidence="3">
    <location>
        <begin position="228"/>
        <end position="237"/>
    </location>
</feature>
<feature type="compositionally biased region" description="Basic and acidic residues" evidence="3">
    <location>
        <begin position="298"/>
        <end position="313"/>
    </location>
</feature>
<feature type="compositionally biased region" description="Acidic residues" evidence="3">
    <location>
        <begin position="314"/>
        <end position="323"/>
    </location>
</feature>
<feature type="compositionally biased region" description="Basic and acidic residues" evidence="3">
    <location>
        <begin position="324"/>
        <end position="333"/>
    </location>
</feature>
<feature type="compositionally biased region" description="Basic and acidic residues" evidence="3">
    <location>
        <begin position="357"/>
        <end position="369"/>
    </location>
</feature>
<feature type="compositionally biased region" description="Basic residues" evidence="3">
    <location>
        <begin position="422"/>
        <end position="433"/>
    </location>
</feature>
<feature type="compositionally biased region" description="Polar residues" evidence="3">
    <location>
        <begin position="623"/>
        <end position="632"/>
    </location>
</feature>
<feature type="compositionally biased region" description="Basic and acidic residues" evidence="3">
    <location>
        <begin position="634"/>
        <end position="643"/>
    </location>
</feature>
<feature type="disulfide bond" evidence="1">
    <location>
        <begin position="31"/>
        <end position="64"/>
    </location>
</feature>
<feature type="disulfide bond" description="Interchain (between A and B chains)" evidence="1">
    <location>
        <begin position="107"/>
        <end position="464"/>
    </location>
</feature>
<name>CONA2_LUPAN</name>
<sequence>MAKPCLFSFSLCLLLLSSLCLAERPERYKECQLDRLNALEPDNRVESEGGVTETWNSNRPELRCAGVAFEKHTIQPQGLHLPSYTNYPQLIFIVEGEGALGISVPGCTETYEEAQQSQSSQDPRRRSSRSQSQEQEQQDSHQKIQYFREGDIIAIPPGIPYWTYNYGEQRLVAINLLDTTSLLNQLDPSPRRFYIAGNPEEEHPETQEQQGQQREQQQGAGGRRRGKHQQEQEEEGKNNVLSGFDPQFLTQAFNVDEEIINRLQNPDERLKQIVRVKRGLSIISPKSQEEEEEEEEEPRQRGQPERREERREEEKEEEEEEDEPRSRERYERQSRRRPGRQQGRQGEEQEEESESEQEGRGQQREWERTTRHRRAQGEEGEEEEEETSTRVRRQQGRGRGQEQGQEQGQEQEQEEEQQEGRRGRHGGRGRRSGQQREEEEEEQQQQQGRRKRQESRNGLEETICTARLLENIAKPSRADLYNPNAGRISSVNSLTLPILRWFQLSADYVNLYRNGIYAPHWNINANSVIFVTRGRGRVQVVNCQGNSVFNDDLRRGQLLVVPQNFVVAHQAGDEGFEFIAFKTNDLAATSPVKQVFRGIPAEVLANAFGLRLNQVSQLKYSGNQGPLVSPQSESEDHTLPKVA</sequence>
<proteinExistence type="evidence at protein level"/>
<keyword id="KW-0020">Allergen</keyword>
<keyword id="KW-1015">Disulfide bond</keyword>
<keyword id="KW-1185">Reference proteome</keyword>
<keyword id="KW-0708">Seed storage protein</keyword>
<keyword id="KW-0732">Signal</keyword>
<keyword id="KW-0758">Storage protein</keyword>